<reference key="1">
    <citation type="journal article" date="2006" name="Peptides">
        <title>The Chinese bamboo leaf odorous frog (Rana (odorrana) versabilis) and north american rana frogs share the same families of skin antimicrobial peptides.</title>
        <authorList>
            <person name="Chen T."/>
            <person name="Zhou M."/>
            <person name="Rao P."/>
            <person name="Walker B."/>
            <person name="Shaw C."/>
        </authorList>
    </citation>
    <scope>NUCLEOTIDE SEQUENCE [MRNA]</scope>
    <scope>MASS SPECTROMETRY</scope>
    <source>
        <tissue>Skin secretion</tissue>
    </source>
</reference>
<feature type="signal peptide" evidence="2">
    <location>
        <begin position="1"/>
        <end position="22"/>
    </location>
</feature>
<feature type="propeptide" id="PRO_0000268223">
    <location>
        <begin position="23"/>
        <end position="36"/>
    </location>
</feature>
<feature type="peptide" id="PRO_0000268224" description="Palustrin-3b">
    <location>
        <begin position="39"/>
        <end position="86"/>
    </location>
</feature>
<feature type="disulfide bond">
    <location>
        <begin position="81"/>
        <end position="86"/>
    </location>
</feature>
<evidence type="ECO:0000250" key="1"/>
<evidence type="ECO:0000255" key="2"/>
<evidence type="ECO:0000269" key="3">
    <source>
    </source>
</evidence>
<evidence type="ECO:0000305" key="4"/>
<accession>Q1JS88</accession>
<dbReference type="EMBL" id="AM113513">
    <property type="protein sequence ID" value="CAJ34609.1"/>
    <property type="molecule type" value="mRNA"/>
</dbReference>
<dbReference type="GO" id="GO:0005576">
    <property type="term" value="C:extracellular region"/>
    <property type="evidence" value="ECO:0007669"/>
    <property type="project" value="UniProtKB-SubCell"/>
</dbReference>
<dbReference type="GO" id="GO:0050829">
    <property type="term" value="P:defense response to Gram-negative bacterium"/>
    <property type="evidence" value="ECO:0007669"/>
    <property type="project" value="UniProtKB-ARBA"/>
</dbReference>
<dbReference type="GO" id="GO:0050830">
    <property type="term" value="P:defense response to Gram-positive bacterium"/>
    <property type="evidence" value="ECO:0007669"/>
    <property type="project" value="UniProtKB-ARBA"/>
</dbReference>
<dbReference type="InterPro" id="IPR004275">
    <property type="entry name" value="Frog_antimicrobial_propeptide"/>
</dbReference>
<dbReference type="Pfam" id="PF03032">
    <property type="entry name" value="FSAP_sig_propep"/>
    <property type="match status" value="1"/>
</dbReference>
<protein>
    <recommendedName>
        <fullName>Palustrin-3b</fullName>
        <shortName>pal3b</shortName>
    </recommendedName>
</protein>
<proteinExistence type="evidence at protein level"/>
<comment type="function">
    <text evidence="1">Antimicrobial peptide.</text>
</comment>
<comment type="subcellular location">
    <subcellularLocation>
        <location>Secreted</location>
    </subcellularLocation>
</comment>
<comment type="tissue specificity">
    <text>Expressed by the skin glands.</text>
</comment>
<comment type="mass spectrometry"/>
<comment type="similarity">
    <text evidence="4">Belongs to the frog skin active peptide (FSAP) family. Brevinin subfamily.</text>
</comment>
<sequence>MFTLKKPLLLIVLLGIISLSLCEQERNADEDEESEIKRGIFPKIIGKGIKTGIVNGIKSLVKGVGMKVFKAGLSNIGNTGCNEDEC</sequence>
<name>PA3B_ODOVE</name>
<keyword id="KW-0878">Amphibian defense peptide</keyword>
<keyword id="KW-0044">Antibiotic</keyword>
<keyword id="KW-0929">Antimicrobial</keyword>
<keyword id="KW-0165">Cleavage on pair of basic residues</keyword>
<keyword id="KW-1015">Disulfide bond</keyword>
<keyword id="KW-0964">Secreted</keyword>
<keyword id="KW-0732">Signal</keyword>
<organism>
    <name type="scientific">Odorrana versabilis</name>
    <name type="common">Chinese bamboo leaf odorous frog</name>
    <name type="synonym">Rana versabilis</name>
    <dbReference type="NCBI Taxonomy" id="326940"/>
    <lineage>
        <taxon>Eukaryota</taxon>
        <taxon>Metazoa</taxon>
        <taxon>Chordata</taxon>
        <taxon>Craniata</taxon>
        <taxon>Vertebrata</taxon>
        <taxon>Euteleostomi</taxon>
        <taxon>Amphibia</taxon>
        <taxon>Batrachia</taxon>
        <taxon>Anura</taxon>
        <taxon>Neobatrachia</taxon>
        <taxon>Ranoidea</taxon>
        <taxon>Ranidae</taxon>
        <taxon>Odorrana</taxon>
    </lineage>
</organism>